<protein>
    <recommendedName>
        <fullName>Fibril protein</fullName>
    </recommendedName>
</protein>
<proteinExistence type="evidence at protein level"/>
<reference key="1">
    <citation type="journal article" date="1991" name="J. Bacteriol.">
        <title>Nucleotide sequence of the Spiroplasma citri fibril protein gene.</title>
        <authorList>
            <person name="Williamson D.L."/>
            <person name="Renaudin J."/>
            <person name="Bove J.M."/>
        </authorList>
    </citation>
    <scope>NUCLEOTIDE SEQUENCE [GENOMIC DNA]</scope>
    <scope>PARTIAL PROTEIN SEQUENCE</scope>
    <source>
        <strain>ATCC 27556 / NCPPB 2647 / R8A2</strain>
    </source>
</reference>
<evidence type="ECO:0000255" key="1"/>
<name>FIB_SPICI</name>
<keyword id="KW-0963">Cytoplasm</keyword>
<keyword id="KW-0206">Cytoskeleton</keyword>
<keyword id="KW-0903">Direct protein sequencing</keyword>
<organism>
    <name type="scientific">Spiroplasma citri</name>
    <dbReference type="NCBI Taxonomy" id="2133"/>
    <lineage>
        <taxon>Bacteria</taxon>
        <taxon>Bacillati</taxon>
        <taxon>Mycoplasmatota</taxon>
        <taxon>Mollicutes</taxon>
        <taxon>Entomoplasmatales</taxon>
        <taxon>Spiroplasmataceae</taxon>
        <taxon>Spiroplasma</taxon>
    </lineage>
</organism>
<comment type="function">
    <text>Acts as a cytoskeletal structure involved in the shape and motility of spiroplasmas.</text>
</comment>
<comment type="subcellular location">
    <subcellularLocation>
        <location>Cytoplasm</location>
        <location>Cytoskeleton</location>
    </subcellularLocation>
</comment>
<dbReference type="EMBL" id="M62504">
    <property type="protein sequence ID" value="AAA26583.1"/>
    <property type="molecule type" value="Genomic_DNA"/>
</dbReference>
<dbReference type="PIR" id="A43668">
    <property type="entry name" value="A43668"/>
</dbReference>
<dbReference type="SMR" id="P27711"/>
<dbReference type="STRING" id="2133.SCITRI_00717"/>
<dbReference type="GO" id="GO:0005856">
    <property type="term" value="C:cytoskeleton"/>
    <property type="evidence" value="ECO:0007669"/>
    <property type="project" value="UniProtKB-SubCell"/>
</dbReference>
<dbReference type="GO" id="GO:0005829">
    <property type="term" value="C:cytosol"/>
    <property type="evidence" value="ECO:0007669"/>
    <property type="project" value="TreeGrafter"/>
</dbReference>
<dbReference type="GO" id="GO:0008782">
    <property type="term" value="F:adenosylhomocysteine nucleosidase activity"/>
    <property type="evidence" value="ECO:0007669"/>
    <property type="project" value="TreeGrafter"/>
</dbReference>
<dbReference type="GO" id="GO:0008930">
    <property type="term" value="F:methylthioadenosine nucleosidase activity"/>
    <property type="evidence" value="ECO:0007669"/>
    <property type="project" value="TreeGrafter"/>
</dbReference>
<dbReference type="GO" id="GO:0019284">
    <property type="term" value="P:L-methionine salvage from S-adenosylmethionine"/>
    <property type="evidence" value="ECO:0007669"/>
    <property type="project" value="TreeGrafter"/>
</dbReference>
<dbReference type="GO" id="GO:0009116">
    <property type="term" value="P:nucleoside metabolic process"/>
    <property type="evidence" value="ECO:0007669"/>
    <property type="project" value="InterPro"/>
</dbReference>
<dbReference type="Gene3D" id="3.40.50.1580">
    <property type="entry name" value="Nucleoside phosphorylase domain"/>
    <property type="match status" value="1"/>
</dbReference>
<dbReference type="InterPro" id="IPR000845">
    <property type="entry name" value="Nucleoside_phosphorylase_d"/>
</dbReference>
<dbReference type="InterPro" id="IPR035994">
    <property type="entry name" value="Nucleoside_phosphorylase_sf"/>
</dbReference>
<dbReference type="NCBIfam" id="NF033570">
    <property type="entry name" value="FIB_Spiroplas"/>
    <property type="match status" value="1"/>
</dbReference>
<dbReference type="PANTHER" id="PTHR46832">
    <property type="entry name" value="5'-METHYLTHIOADENOSINE/S-ADENOSYLHOMOCYSTEINE NUCLEOSIDASE"/>
    <property type="match status" value="1"/>
</dbReference>
<dbReference type="PANTHER" id="PTHR46832:SF1">
    <property type="entry name" value="5'-METHYLTHIOADENOSINE_S-ADENOSYLHOMOCYSTEINE NUCLEOSIDASE"/>
    <property type="match status" value="1"/>
</dbReference>
<dbReference type="Pfam" id="PF01048">
    <property type="entry name" value="PNP_UDP_1"/>
    <property type="match status" value="1"/>
</dbReference>
<dbReference type="SUPFAM" id="SSF53167">
    <property type="entry name" value="Purine and uridine phosphorylases"/>
    <property type="match status" value="1"/>
</dbReference>
<sequence length="515" mass="59032">MIGVISTAYFTMKDKHSIKTVKKYWWKNCVIQHVKYHGKTFIIATVGYGKANAAMTITYLLEKYPGLQTILNVDLALSTNDKHDTGDTTISTKFIYRDADLTVFKDIKYGQIVNEPESFQFDGEFAKVVKDFKLGLTEGVTGTADMLIYNSKQFKEMVDKYGHTIDVIDTEAGAIAQVAKKSSINYIALKIIYNNALSPWDNDPIHKFKMYETVNTLKYLLRRLFNLLSSNYIIDLSQCSQDDLDSINELFEIKHDQWIKLFKPNTHKVLSGFGPSLMLVDKQEKTPVALDIIQVIRSKTKEAEGPSKVILGEDEWKNAPKKWLRKLLFLEQVRVNDDELLWNKSAKYDLNNEKLYKIETVETVANEIAAAIAEKCQDKSSYTYNGATVPEKYLLVNCDARISFYITHNQSHEFVEDKNFGTQLVSNEFLKYLNEALKDVDSPYQQIVIYMTIPALDYRKISVFIPSNKGANRGVKFVALNQKLQRDYTVVDITRNDYDPIKVGSFKVTIRLKSE</sequence>
<accession>P27711</accession>
<feature type="chain" id="PRO_0000087239" description="Fibril protein">
    <location>
        <begin position="1"/>
        <end position="515"/>
    </location>
</feature>
<feature type="region of interest" description="Helical 1" evidence="1">
    <location>
        <begin position="21"/>
        <end position="34"/>
    </location>
</feature>
<feature type="region of interest" description="Helical 2" evidence="1">
    <location>
        <begin position="206"/>
        <end position="228"/>
    </location>
</feature>
<feature type="region of interest" description="Helical 3" evidence="1">
    <location>
        <begin position="357"/>
        <end position="376"/>
    </location>
</feature>
<feature type="region of interest" description="Helical 4" evidence="1">
    <location>
        <begin position="426"/>
        <end position="440"/>
    </location>
</feature>
<feature type="modified residue" description="Blocked amino end (Met)">
    <location>
        <position position="1"/>
    </location>
</feature>